<gene>
    <name type="primary">Pacs2</name>
    <name type="synonym">Kiaa0602</name>
    <name type="synonym">Pacs1l</name>
</gene>
<sequence length="862" mass="94932">MAERGRLGLPGAPGALNTPVPMNLFATWEVDGSSPSCVPRLCSLTLKKLAVLRELEKELLSVVIAVKMQYPHFLKREGNKLQIMLQRRKRYKNRTILGYKTLAAGSINMAEVMQHPSEGGQVLSLCSSIKEASVKVAEIWIVSLSSQPIDHEDSAMQAGPKTKSTDNYSEEEYESFSSEQEASDDAVQGQDLDEDDFDVGKPKKQRRSIVRTTSMTRQQNFKQKVVALLRRFKVSEEVLDSEQDPAEHVPEVEEDLDLLYDTLDVENPSDSGPDMDDDDSVLSTPKPKLRPYFEGLSHSSSQTEIGSIHSARSHREPPSPADVPEKTRSLGGKQQLSDSVSDTVALSAAVPREPSGQPEDSPEAETSTLDVFTEKLPPSGRIIKTESLVIPSTRSESKPAGRRGRSTSLKERQPARPQNERANSLDNERCPDTRSQLQIPRKTVYDQLNHILISDDQLPENIILVNTSDWQGQFLSDVLQKHTLPVVCTCSAADVQAAFSTIVSRIQRYCNCNSQPPTPVKIAVAGAQHYLSAILRLFVEQLSHKTPDWLGYMRFLIIPLGSHPVARYLGSVDYRYNNFFQDLAWRDLFNKLEAQSSVQDTPDIVSRITQYISGANCAHQLPIAEAMLTYKQKSPDEESSQRFIPFVGVVKVGIVEPSSATSGDSDDAAPSSSSILSSTPPSASTSPAAKEASPTPPSSPSVSGGLSSPSQGVGAELMGLQVDYWTAAQPADRKRDAEKKDMPTTKNTLKCTFRSLQVSRLPSSGEAAATPTMSMTVVTKEKNKKVMFLPKKTKDKEVESKSQCIEGISRLICTAKHQQNMLRVLIDGVECSDVKFFQLAAQWSSHVKHFPICIFGHSKATF</sequence>
<dbReference type="EMBL" id="AK036581">
    <property type="protein sequence ID" value="BAE20504.1"/>
    <property type="molecule type" value="mRNA"/>
</dbReference>
<dbReference type="EMBL" id="AC073562">
    <property type="status" value="NOT_ANNOTATED_CDS"/>
    <property type="molecule type" value="Genomic_DNA"/>
</dbReference>
<dbReference type="EMBL" id="AK122326">
    <property type="protein sequence ID" value="BAC65608.1"/>
    <property type="molecule type" value="mRNA"/>
</dbReference>
<dbReference type="EMBL" id="BC043302">
    <property type="protein sequence ID" value="AAH43302.1"/>
    <property type="molecule type" value="mRNA"/>
</dbReference>
<dbReference type="CCDS" id="CCDS88412.1"/>
<dbReference type="RefSeq" id="NP_001278374.1">
    <property type="nucleotide sequence ID" value="NM_001291445.1"/>
</dbReference>
<dbReference type="BioGRID" id="229978">
    <property type="interactions" value="4"/>
</dbReference>
<dbReference type="FunCoup" id="Q3V3Q7">
    <property type="interactions" value="3213"/>
</dbReference>
<dbReference type="STRING" id="10090.ENSMUSP00000081953"/>
<dbReference type="GlyGen" id="Q3V3Q7">
    <property type="glycosylation" value="2 sites, 1 O-linked glycan (1 site)"/>
</dbReference>
<dbReference type="iPTMnet" id="Q3V3Q7"/>
<dbReference type="PhosphoSitePlus" id="Q3V3Q7"/>
<dbReference type="jPOST" id="Q3V3Q7"/>
<dbReference type="PaxDb" id="10090-ENSMUSP00000081953"/>
<dbReference type="PeptideAtlas" id="Q3V3Q7"/>
<dbReference type="ProteomicsDB" id="287764"/>
<dbReference type="Pumba" id="Q3V3Q7"/>
<dbReference type="Antibodypedia" id="93">
    <property type="antibodies" value="116 antibodies from 23 providers"/>
</dbReference>
<dbReference type="Ensembl" id="ENSMUST00000220541.2">
    <property type="protein sequence ID" value="ENSMUSP00000152145.2"/>
    <property type="gene ID" value="ENSMUSG00000021143.11"/>
</dbReference>
<dbReference type="GeneID" id="217893"/>
<dbReference type="KEGG" id="mmu:217893"/>
<dbReference type="UCSC" id="uc007pfq.2">
    <property type="organism name" value="mouse"/>
</dbReference>
<dbReference type="AGR" id="MGI:1924399"/>
<dbReference type="CTD" id="23241"/>
<dbReference type="MGI" id="MGI:1924399">
    <property type="gene designation" value="Pacs2"/>
</dbReference>
<dbReference type="VEuPathDB" id="HostDB:ENSMUSG00000021143"/>
<dbReference type="eggNOG" id="KOG3709">
    <property type="taxonomic scope" value="Eukaryota"/>
</dbReference>
<dbReference type="GeneTree" id="ENSGT00950000183209"/>
<dbReference type="InParanoid" id="Q3V3Q7"/>
<dbReference type="OrthoDB" id="28829at2759"/>
<dbReference type="BioGRID-ORCS" id="217893">
    <property type="hits" value="0 hits in 80 CRISPR screens"/>
</dbReference>
<dbReference type="ChiTaRS" id="Pacs2">
    <property type="organism name" value="mouse"/>
</dbReference>
<dbReference type="PRO" id="PR:Q3V3Q7"/>
<dbReference type="Proteomes" id="UP000000589">
    <property type="component" value="Chromosome 12"/>
</dbReference>
<dbReference type="RNAct" id="Q3V3Q7">
    <property type="molecule type" value="protein"/>
</dbReference>
<dbReference type="Bgee" id="ENSMUSG00000021143">
    <property type="expression patterns" value="Expressed in gastrula and 241 other cell types or tissues"/>
</dbReference>
<dbReference type="ExpressionAtlas" id="Q3V3Q7">
    <property type="expression patterns" value="baseline and differential"/>
</dbReference>
<dbReference type="GO" id="GO:0005783">
    <property type="term" value="C:endoplasmic reticulum"/>
    <property type="evidence" value="ECO:0007669"/>
    <property type="project" value="UniProtKB-SubCell"/>
</dbReference>
<dbReference type="GO" id="GO:0005739">
    <property type="term" value="C:mitochondrion"/>
    <property type="evidence" value="ECO:0007669"/>
    <property type="project" value="UniProtKB-SubCell"/>
</dbReference>
<dbReference type="GO" id="GO:0006915">
    <property type="term" value="P:apoptotic process"/>
    <property type="evidence" value="ECO:0007669"/>
    <property type="project" value="UniProtKB-KW"/>
</dbReference>
<dbReference type="GO" id="GO:0000045">
    <property type="term" value="P:autophagosome assembly"/>
    <property type="evidence" value="ECO:0000266"/>
    <property type="project" value="MGI"/>
</dbReference>
<dbReference type="GO" id="GO:0034497">
    <property type="term" value="P:protein localization to phagophore assembly site"/>
    <property type="evidence" value="ECO:0000266"/>
    <property type="project" value="MGI"/>
</dbReference>
<dbReference type="InterPro" id="IPR019381">
    <property type="entry name" value="Phosphofurin_acidic_CS-1"/>
</dbReference>
<dbReference type="PANTHER" id="PTHR13280">
    <property type="entry name" value="PHOSPHOFURIN ACIDIC CLUSTER SORTING PROTEIN"/>
    <property type="match status" value="1"/>
</dbReference>
<dbReference type="PANTHER" id="PTHR13280:SF15">
    <property type="entry name" value="PHOSPHOFURIN ACIDIC CLUSTER SORTING PROTEIN 2"/>
    <property type="match status" value="1"/>
</dbReference>
<dbReference type="Pfam" id="PF25332">
    <property type="entry name" value="C2_PACS_N"/>
    <property type="match status" value="1"/>
</dbReference>
<dbReference type="Pfam" id="PF10254">
    <property type="entry name" value="Pacs-1"/>
    <property type="match status" value="1"/>
</dbReference>
<accession>Q3V3Q7</accession>
<accession>E9QKL3</accession>
<accession>Q80TW2</accession>
<accession>Q80VG3</accession>
<protein>
    <recommendedName>
        <fullName>Phosphofurin acidic cluster sorting protein 2</fullName>
        <shortName>PACS-2</shortName>
    </recommendedName>
    <alternativeName>
        <fullName>PACS1-like protein</fullName>
    </alternativeName>
</protein>
<proteinExistence type="evidence at protein level"/>
<organism>
    <name type="scientific">Mus musculus</name>
    <name type="common">Mouse</name>
    <dbReference type="NCBI Taxonomy" id="10090"/>
    <lineage>
        <taxon>Eukaryota</taxon>
        <taxon>Metazoa</taxon>
        <taxon>Chordata</taxon>
        <taxon>Craniata</taxon>
        <taxon>Vertebrata</taxon>
        <taxon>Euteleostomi</taxon>
        <taxon>Mammalia</taxon>
        <taxon>Eutheria</taxon>
        <taxon>Euarchontoglires</taxon>
        <taxon>Glires</taxon>
        <taxon>Rodentia</taxon>
        <taxon>Myomorpha</taxon>
        <taxon>Muroidea</taxon>
        <taxon>Muridae</taxon>
        <taxon>Murinae</taxon>
        <taxon>Mus</taxon>
        <taxon>Mus</taxon>
    </lineage>
</organism>
<reference key="1">
    <citation type="journal article" date="2005" name="Science">
        <title>The transcriptional landscape of the mammalian genome.</title>
        <authorList>
            <person name="Carninci P."/>
            <person name="Kasukawa T."/>
            <person name="Katayama S."/>
            <person name="Gough J."/>
            <person name="Frith M.C."/>
            <person name="Maeda N."/>
            <person name="Oyama R."/>
            <person name="Ravasi T."/>
            <person name="Lenhard B."/>
            <person name="Wells C."/>
            <person name="Kodzius R."/>
            <person name="Shimokawa K."/>
            <person name="Bajic V.B."/>
            <person name="Brenner S.E."/>
            <person name="Batalov S."/>
            <person name="Forrest A.R."/>
            <person name="Zavolan M."/>
            <person name="Davis M.J."/>
            <person name="Wilming L.G."/>
            <person name="Aidinis V."/>
            <person name="Allen J.E."/>
            <person name="Ambesi-Impiombato A."/>
            <person name="Apweiler R."/>
            <person name="Aturaliya R.N."/>
            <person name="Bailey T.L."/>
            <person name="Bansal M."/>
            <person name="Baxter L."/>
            <person name="Beisel K.W."/>
            <person name="Bersano T."/>
            <person name="Bono H."/>
            <person name="Chalk A.M."/>
            <person name="Chiu K.P."/>
            <person name="Choudhary V."/>
            <person name="Christoffels A."/>
            <person name="Clutterbuck D.R."/>
            <person name="Crowe M.L."/>
            <person name="Dalla E."/>
            <person name="Dalrymple B.P."/>
            <person name="de Bono B."/>
            <person name="Della Gatta G."/>
            <person name="di Bernardo D."/>
            <person name="Down T."/>
            <person name="Engstrom P."/>
            <person name="Fagiolini M."/>
            <person name="Faulkner G."/>
            <person name="Fletcher C.F."/>
            <person name="Fukushima T."/>
            <person name="Furuno M."/>
            <person name="Futaki S."/>
            <person name="Gariboldi M."/>
            <person name="Georgii-Hemming P."/>
            <person name="Gingeras T.R."/>
            <person name="Gojobori T."/>
            <person name="Green R.E."/>
            <person name="Gustincich S."/>
            <person name="Harbers M."/>
            <person name="Hayashi Y."/>
            <person name="Hensch T.K."/>
            <person name="Hirokawa N."/>
            <person name="Hill D."/>
            <person name="Huminiecki L."/>
            <person name="Iacono M."/>
            <person name="Ikeo K."/>
            <person name="Iwama A."/>
            <person name="Ishikawa T."/>
            <person name="Jakt M."/>
            <person name="Kanapin A."/>
            <person name="Katoh M."/>
            <person name="Kawasawa Y."/>
            <person name="Kelso J."/>
            <person name="Kitamura H."/>
            <person name="Kitano H."/>
            <person name="Kollias G."/>
            <person name="Krishnan S.P."/>
            <person name="Kruger A."/>
            <person name="Kummerfeld S.K."/>
            <person name="Kurochkin I.V."/>
            <person name="Lareau L.F."/>
            <person name="Lazarevic D."/>
            <person name="Lipovich L."/>
            <person name="Liu J."/>
            <person name="Liuni S."/>
            <person name="McWilliam S."/>
            <person name="Madan Babu M."/>
            <person name="Madera M."/>
            <person name="Marchionni L."/>
            <person name="Matsuda H."/>
            <person name="Matsuzawa S."/>
            <person name="Miki H."/>
            <person name="Mignone F."/>
            <person name="Miyake S."/>
            <person name="Morris K."/>
            <person name="Mottagui-Tabar S."/>
            <person name="Mulder N."/>
            <person name="Nakano N."/>
            <person name="Nakauchi H."/>
            <person name="Ng P."/>
            <person name="Nilsson R."/>
            <person name="Nishiguchi S."/>
            <person name="Nishikawa S."/>
            <person name="Nori F."/>
            <person name="Ohara O."/>
            <person name="Okazaki Y."/>
            <person name="Orlando V."/>
            <person name="Pang K.C."/>
            <person name="Pavan W.J."/>
            <person name="Pavesi G."/>
            <person name="Pesole G."/>
            <person name="Petrovsky N."/>
            <person name="Piazza S."/>
            <person name="Reed J."/>
            <person name="Reid J.F."/>
            <person name="Ring B.Z."/>
            <person name="Ringwald M."/>
            <person name="Rost B."/>
            <person name="Ruan Y."/>
            <person name="Salzberg S.L."/>
            <person name="Sandelin A."/>
            <person name="Schneider C."/>
            <person name="Schoenbach C."/>
            <person name="Sekiguchi K."/>
            <person name="Semple C.A."/>
            <person name="Seno S."/>
            <person name="Sessa L."/>
            <person name="Sheng Y."/>
            <person name="Shibata Y."/>
            <person name="Shimada H."/>
            <person name="Shimada K."/>
            <person name="Silva D."/>
            <person name="Sinclair B."/>
            <person name="Sperling S."/>
            <person name="Stupka E."/>
            <person name="Sugiura K."/>
            <person name="Sultana R."/>
            <person name="Takenaka Y."/>
            <person name="Taki K."/>
            <person name="Tammoja K."/>
            <person name="Tan S.L."/>
            <person name="Tang S."/>
            <person name="Taylor M.S."/>
            <person name="Tegner J."/>
            <person name="Teichmann S.A."/>
            <person name="Ueda H.R."/>
            <person name="van Nimwegen E."/>
            <person name="Verardo R."/>
            <person name="Wei C.L."/>
            <person name="Yagi K."/>
            <person name="Yamanishi H."/>
            <person name="Zabarovsky E."/>
            <person name="Zhu S."/>
            <person name="Zimmer A."/>
            <person name="Hide W."/>
            <person name="Bult C."/>
            <person name="Grimmond S.M."/>
            <person name="Teasdale R.D."/>
            <person name="Liu E.T."/>
            <person name="Brusic V."/>
            <person name="Quackenbush J."/>
            <person name="Wahlestedt C."/>
            <person name="Mattick J.S."/>
            <person name="Hume D.A."/>
            <person name="Kai C."/>
            <person name="Sasaki D."/>
            <person name="Tomaru Y."/>
            <person name="Fukuda S."/>
            <person name="Kanamori-Katayama M."/>
            <person name="Suzuki M."/>
            <person name="Aoki J."/>
            <person name="Arakawa T."/>
            <person name="Iida J."/>
            <person name="Imamura K."/>
            <person name="Itoh M."/>
            <person name="Kato T."/>
            <person name="Kawaji H."/>
            <person name="Kawagashira N."/>
            <person name="Kawashima T."/>
            <person name="Kojima M."/>
            <person name="Kondo S."/>
            <person name="Konno H."/>
            <person name="Nakano K."/>
            <person name="Ninomiya N."/>
            <person name="Nishio T."/>
            <person name="Okada M."/>
            <person name="Plessy C."/>
            <person name="Shibata K."/>
            <person name="Shiraki T."/>
            <person name="Suzuki S."/>
            <person name="Tagami M."/>
            <person name="Waki K."/>
            <person name="Watahiki A."/>
            <person name="Okamura-Oho Y."/>
            <person name="Suzuki H."/>
            <person name="Kawai J."/>
            <person name="Hayashizaki Y."/>
        </authorList>
    </citation>
    <scope>NUCLEOTIDE SEQUENCE [LARGE SCALE MRNA]</scope>
    <source>
        <strain>C57BL/6J</strain>
        <tissue>Bone</tissue>
    </source>
</reference>
<reference key="2">
    <citation type="journal article" date="2009" name="PLoS Biol.">
        <title>Lineage-specific biology revealed by a finished genome assembly of the mouse.</title>
        <authorList>
            <person name="Church D.M."/>
            <person name="Goodstadt L."/>
            <person name="Hillier L.W."/>
            <person name="Zody M.C."/>
            <person name="Goldstein S."/>
            <person name="She X."/>
            <person name="Bult C.J."/>
            <person name="Agarwala R."/>
            <person name="Cherry J.L."/>
            <person name="DiCuccio M."/>
            <person name="Hlavina W."/>
            <person name="Kapustin Y."/>
            <person name="Meric P."/>
            <person name="Maglott D."/>
            <person name="Birtle Z."/>
            <person name="Marques A.C."/>
            <person name="Graves T."/>
            <person name="Zhou S."/>
            <person name="Teague B."/>
            <person name="Potamousis K."/>
            <person name="Churas C."/>
            <person name="Place M."/>
            <person name="Herschleb J."/>
            <person name="Runnheim R."/>
            <person name="Forrest D."/>
            <person name="Amos-Landgraf J."/>
            <person name="Schwartz D.C."/>
            <person name="Cheng Z."/>
            <person name="Lindblad-Toh K."/>
            <person name="Eichler E.E."/>
            <person name="Ponting C.P."/>
        </authorList>
    </citation>
    <scope>NUCLEOTIDE SEQUENCE [LARGE SCALE GENOMIC DNA]</scope>
    <source>
        <strain>C57BL/6J</strain>
    </source>
</reference>
<reference key="3">
    <citation type="journal article" date="2003" name="DNA Res.">
        <title>Prediction of the coding sequences of mouse homologues of KIAA gene: II. The complete nucleotide sequences of 400 mouse KIAA-homologous cDNAs identified by screening of terminal sequences of cDNA clones randomly sampled from size-fractionated libraries.</title>
        <authorList>
            <person name="Okazaki N."/>
            <person name="Kikuno R."/>
            <person name="Ohara R."/>
            <person name="Inamoto S."/>
            <person name="Aizawa H."/>
            <person name="Yuasa S."/>
            <person name="Nakajima D."/>
            <person name="Nagase T."/>
            <person name="Ohara O."/>
            <person name="Koga H."/>
        </authorList>
    </citation>
    <scope>NUCLEOTIDE SEQUENCE [LARGE SCALE MRNA] OF 56-862</scope>
    <source>
        <tissue>Brain</tissue>
    </source>
</reference>
<reference key="4">
    <citation type="journal article" date="2004" name="Genome Res.">
        <title>The status, quality, and expansion of the NIH full-length cDNA project: the Mammalian Gene Collection (MGC).</title>
        <authorList>
            <consortium name="The MGC Project Team"/>
        </authorList>
    </citation>
    <scope>NUCLEOTIDE SEQUENCE [LARGE SCALE MRNA] OF 647-862</scope>
    <source>
        <strain>FVB/N</strain>
        <tissue>Mammary gland</tissue>
    </source>
</reference>
<reference key="5">
    <citation type="journal article" date="2010" name="Cell">
        <title>A tissue-specific atlas of mouse protein phosphorylation and expression.</title>
        <authorList>
            <person name="Huttlin E.L."/>
            <person name="Jedrychowski M.P."/>
            <person name="Elias J.E."/>
            <person name="Goswami T."/>
            <person name="Rad R."/>
            <person name="Beausoleil S.A."/>
            <person name="Villen J."/>
            <person name="Haas W."/>
            <person name="Sowa M.E."/>
            <person name="Gygi S.P."/>
        </authorList>
    </citation>
    <scope>PHOSPHORYLATION [LARGE SCALE ANALYSIS] AT SER-361; SER-662 AND SER-665</scope>
    <scope>IDENTIFICATION BY MASS SPECTROMETRY [LARGE SCALE ANALYSIS]</scope>
    <source>
        <tissue>Brain</tissue>
        <tissue>Brown adipose tissue</tissue>
        <tissue>Heart</tissue>
        <tissue>Kidney</tissue>
        <tissue>Lung</tissue>
        <tissue>Pancreas</tissue>
    </source>
</reference>
<feature type="chain" id="PRO_0000259512" description="Phosphofurin acidic cluster sorting protein 2">
    <location>
        <begin position="1"/>
        <end position="862"/>
    </location>
</feature>
<feature type="region of interest" description="Disordered" evidence="2">
    <location>
        <begin position="151"/>
        <end position="215"/>
    </location>
</feature>
<feature type="region of interest" description="Disordered" evidence="2">
    <location>
        <begin position="263"/>
        <end position="436"/>
    </location>
</feature>
<feature type="region of interest" description="Disordered" evidence="2">
    <location>
        <begin position="658"/>
        <end position="713"/>
    </location>
</feature>
<feature type="compositionally biased region" description="Low complexity" evidence="2">
    <location>
        <begin position="263"/>
        <end position="272"/>
    </location>
</feature>
<feature type="compositionally biased region" description="Basic and acidic residues" evidence="2">
    <location>
        <begin position="313"/>
        <end position="328"/>
    </location>
</feature>
<feature type="compositionally biased region" description="Polar residues" evidence="2">
    <location>
        <begin position="332"/>
        <end position="344"/>
    </location>
</feature>
<feature type="compositionally biased region" description="Low complexity" evidence="2">
    <location>
        <begin position="658"/>
        <end position="693"/>
    </location>
</feature>
<feature type="compositionally biased region" description="Low complexity" evidence="2">
    <location>
        <begin position="700"/>
        <end position="710"/>
    </location>
</feature>
<feature type="modified residue" description="Phosphoserine" evidence="4">
    <location>
        <position position="361"/>
    </location>
</feature>
<feature type="modified residue" description="Phosphoserine" evidence="1">
    <location>
        <position position="387"/>
    </location>
</feature>
<feature type="modified residue" description="Phosphoserine" evidence="1">
    <location>
        <position position="424"/>
    </location>
</feature>
<feature type="modified residue" description="Phosphoserine" evidence="4">
    <location>
        <position position="662"/>
    </location>
</feature>
<feature type="modified residue" description="Phosphoserine" evidence="4">
    <location>
        <position position="665"/>
    </location>
</feature>
<feature type="sequence conflict" description="In Ref. 3; BAC65608." evidence="3" ref="3">
    <original>EKELLSVVIAVKM</original>
    <variation>GQVETDLALTFSL</variation>
    <location>
        <begin position="56"/>
        <end position="68"/>
    </location>
</feature>
<feature type="sequence conflict" description="In Ref. 1; BAE20504." evidence="3" ref="1">
    <original>V</original>
    <variation>L</variation>
    <location>
        <position position="122"/>
    </location>
</feature>
<feature type="sequence conflict" description="In Ref. 1; BAE20504." evidence="3" ref="1">
    <original>P</original>
    <variation>S</variation>
    <location>
        <position position="250"/>
    </location>
</feature>
<keyword id="KW-0053">Apoptosis</keyword>
<keyword id="KW-0256">Endoplasmic reticulum</keyword>
<keyword id="KW-0496">Mitochondrion</keyword>
<keyword id="KW-0597">Phosphoprotein</keyword>
<keyword id="KW-1185">Reference proteome</keyword>
<evidence type="ECO:0000250" key="1">
    <source>
        <dbReference type="UniProtKB" id="Q86VP3"/>
    </source>
</evidence>
<evidence type="ECO:0000256" key="2">
    <source>
        <dbReference type="SAM" id="MobiDB-lite"/>
    </source>
</evidence>
<evidence type="ECO:0000305" key="3"/>
<evidence type="ECO:0007744" key="4">
    <source>
    </source>
</evidence>
<name>PACS2_MOUSE</name>
<comment type="function">
    <text evidence="1">Multifunctional sorting protein that controls the endoplasmic reticulum (ER)-mitochondria communication, including the apposition of mitochondria with the ER and ER homeostasis. In addition, in response to apoptotic inducer, translocates BIB to mitochondria, which initiates a sequence of events including the formation of mitochondrial truncated BID, the release of cytochrome c, the activation of caspase-3 thereby causing cell death. May also involved in ion channel trafficking, directing acidic cluster-containing ion channels to distinct subcellular compartments (By similarity).</text>
</comment>
<comment type="subunit">
    <text evidence="1">Interacts with BID and PKD2. Interacts with SIRT1. Interacts with HDAC1. Interacts with TRPV1. Interacts with WDR37.</text>
</comment>
<comment type="subcellular location">
    <subcellularLocation>
        <location evidence="1">Endoplasmic reticulum</location>
    </subcellularLocation>
    <subcellularLocation>
        <location evidence="1">Mitochondrion</location>
    </subcellularLocation>
</comment>
<comment type="similarity">
    <text evidence="3">Belongs to the PACS family.</text>
</comment>